<feature type="chain" id="PRO_0000212729" description="Disease resistance RPP13-like protein 4">
    <location>
        <begin position="1"/>
        <end position="852"/>
    </location>
</feature>
<feature type="domain" description="NB-ARC" evidence="1">
    <location>
        <begin position="164"/>
        <end position="410"/>
    </location>
</feature>
<feature type="repeat" description="LRR 1" evidence="1">
    <location>
        <begin position="558"/>
        <end position="581"/>
    </location>
</feature>
<feature type="repeat" description="LRR 2" evidence="1">
    <location>
        <begin position="585"/>
        <end position="609"/>
    </location>
</feature>
<feature type="repeat" description="LRR 3" evidence="1">
    <location>
        <begin position="633"/>
        <end position="657"/>
    </location>
</feature>
<feature type="repeat" description="LRR 4" evidence="1">
    <location>
        <begin position="683"/>
        <end position="706"/>
    </location>
</feature>
<feature type="repeat" description="LRR 5" evidence="1">
    <location>
        <begin position="763"/>
        <end position="786"/>
    </location>
</feature>
<feature type="repeat" description="LRR 6" evidence="1">
    <location>
        <begin position="798"/>
        <end position="824"/>
    </location>
</feature>
<feature type="coiled-coil region" evidence="1">
    <location>
        <begin position="17"/>
        <end position="68"/>
    </location>
</feature>
<feature type="binding site" evidence="9 16 18">
    <location>
        <position position="149"/>
    </location>
    <ligand>
        <name>ADP</name>
        <dbReference type="ChEBI" id="CHEBI:456216"/>
    </ligand>
</feature>
<feature type="binding site" evidence="8 9 16 17 18">
    <location>
        <position position="161"/>
    </location>
    <ligand>
        <name>ADP</name>
        <dbReference type="ChEBI" id="CHEBI:456216"/>
    </ligand>
</feature>
<feature type="binding site" evidence="8 9 16 17 18">
    <location>
        <begin position="189"/>
        <end position="196"/>
    </location>
    <ligand>
        <name>ADP</name>
        <dbReference type="ChEBI" id="CHEBI:456216"/>
    </ligand>
</feature>
<feature type="binding site" evidence="9 16 18">
    <location>
        <position position="297"/>
    </location>
    <ligand>
        <name>ADP</name>
        <dbReference type="ChEBI" id="CHEBI:456216"/>
    </ligand>
</feature>
<feature type="binding site" evidence="8 17">
    <location>
        <position position="363"/>
    </location>
    <ligand>
        <name>ADP</name>
        <dbReference type="ChEBI" id="CHEBI:456216"/>
    </ligand>
</feature>
<feature type="mutagenesis site" description="Reduced ability to mediate cell death." evidence="9">
    <location>
        <begin position="1"/>
        <end position="23"/>
    </location>
</feature>
<feature type="mutagenesis site" description="Reduced ability to mediate cell death as well as an increased sensitivity to the pathogenic biotrophic bacteria Xanthomonas campestris pv. campestris (Xcc)." evidence="9">
    <location>
        <begin position="1"/>
        <end position="10"/>
    </location>
</feature>
<feature type="mutagenesis site" description="Reduced ability to mediate cell death." evidence="9">
    <location>
        <begin position="1"/>
        <end position="6"/>
    </location>
</feature>
<feature type="mutagenesis site" description="Reduced ability to mediate cell death as well as an increased sensitivity to the pathogenic biotrophic bacteria Xanthomonas campestris pv. campestris (Xcc); when associated with A-10 and A-14." evidence="9">
    <original>F</original>
    <variation>A</variation>
    <location>
        <position position="9"/>
    </location>
</feature>
<feature type="mutagenesis site" description="Reduced ability to mediate cell death as well as an increased sensitivity to the pathogenic biotrophic bacteria Xanthomonas campestris pv. campestris (Xcc); when associated with A-9 and A-14." evidence="9">
    <original>L</original>
    <variation>A</variation>
    <location>
        <position position="10"/>
    </location>
</feature>
<feature type="mutagenesis site" description="Reduced ability to mediate cell death as well as an increased sensitivity to the pathogenic biotrophic bacteria Xanthomonas campestris pv. campestris (Xcc); when associated with A-9 and A-10." evidence="9">
    <original>L</original>
    <variation>A</variation>
    <location>
        <position position="14"/>
    </location>
</feature>
<feature type="mutagenesis site" description="Reduced oligomerization activity associated with a reduced ability to mediate cell death as well as an increased sensitivity to the pathogenic biotrophic bacteria Xanthomonas campestris pv. campestris (Xcc)." evidence="9">
    <original>I</original>
    <variation>E</variation>
    <location>
        <position position="136"/>
    </location>
</feature>
<feature type="mutagenesis site" description="Reduced oligomerization activity associated with a reduced ability to mediate cell death as well as an increased sensitivity to the pathogenic biotrophic bacteria Xanthomonas campestris pv. campestris (Xcc); when associated with A-297." evidence="9">
    <original>R</original>
    <variation>A</variation>
    <location>
        <position position="149"/>
    </location>
</feature>
<feature type="mutagenesis site" description="Reduced oligomerization activity associated with a reduced ability to mediate cell death as well as an increased sensitivity to the pathogenic biotrophic bacteria Xanthomonas campestris pv. campestris (Xcc)." evidence="9">
    <original>W</original>
    <variation>A</variation>
    <location>
        <position position="150"/>
    </location>
</feature>
<feature type="mutagenesis site" description="Reduced oligomerization activity associated with a reduced ability to mediate cell death as well as an increased sensitivity to the pathogenic biotrophic bacteria Xanthomonas campestris pv. campestris (Xcc)." evidence="9">
    <original>S</original>
    <variation>E</variation>
    <location>
        <position position="152"/>
    </location>
</feature>
<feature type="mutagenesis site" description="Reduced oligomerization activity associated with a reduced ability to mediate cell death as well as an increased sensitivity to the pathogenic biotrophic bacteria Xanthomonas campestris pv. campestris (Xcc)." evidence="9">
    <original>V</original>
    <variation>E</variation>
    <location>
        <position position="154"/>
    </location>
</feature>
<feature type="mutagenesis site" description="Lost effector-triggered immunity (ETI) in response to the Xanthomonas campestris effector XopAC/AvrAC in the presence of PBL2 and RKS1. Abolished XopAC/AvrAC-induced self-association." evidence="4 9">
    <original>K</original>
    <variation>N</variation>
    <location>
        <position position="195"/>
    </location>
</feature>
<feature type="mutagenesis site" description="Abolished HopZ1a-induced hypersensitive response (HR) and loss of resistance to Pseudomonas syringae pv. tomato DC3000." evidence="7">
    <original>V</original>
    <variation>M</variation>
    <location>
        <position position="202"/>
    </location>
</feature>
<feature type="mutagenesis site" description="Abolished HopZ1a-induced hypersensitive response (HR) and loss of resistance to Pseudomonas syringae pv. tomato DC3000. Reduced interaction with ZED1." evidence="7">
    <original>S</original>
    <variation>N</variation>
    <location>
        <position position="291"/>
    </location>
</feature>
<feature type="mutagenesis site" description="Reduced oligomerization activity associated with a reduced ability to mediate cell death as well as an increased sensitivity to the pathogenic biotrophic bacteria Xanthomonas campestris pv. campestris (Xcc); when associated with A-149." evidence="9">
    <original>R</original>
    <variation>A</variation>
    <location>
        <position position="297"/>
    </location>
</feature>
<feature type="mutagenesis site" description="Lost ability to trigger cell death in response to the Xanthomonas campestris effector XopAC/AvrAC in the presence of PBL2 and RKS1." evidence="4">
    <original>P</original>
    <variation>L</variation>
    <location>
        <position position="359"/>
    </location>
</feature>
<feature type="mutagenesis site" description="Abolished HopZ1a-induced hypersensitive response (HR) and loss of resistance to Pseudomonas syringae pv. tomato DC3000." evidence="7">
    <original>L</original>
    <variation>F</variation>
    <location>
        <position position="465"/>
    </location>
</feature>
<feature type="mutagenesis site" description="Impaired interaction with RKS1 and reduced ability to mediate cell death as well as an increased sensitivity to the pathogenic biotrophic bacteria Xanthomonas campestris pv. campestris (Xcc)." evidence="8">
    <original>V</original>
    <variation>E</variation>
    <location>
        <position position="544"/>
    </location>
</feature>
<feature type="mutagenesis site" description="Impaired interaction with RKS1 and reduced ability to mediate cell death as well as an increased sensitivity to the pathogenic biotrophic bacteria Xanthomonas campestris pv. campestris (Xcc)." evidence="8">
    <original>H</original>
    <variation>E</variation>
    <location>
        <position position="597"/>
    </location>
</feature>
<feature type="mutagenesis site" description="Abolished HopZ1a-induced hypersensitive response (HR) and loss of resistance to Pseudomonas syringae pv. tomato DC3000. Impaired interaction with ZED1." evidence="7">
    <original>G</original>
    <variation>E</variation>
    <location>
        <position position="645"/>
    </location>
</feature>
<feature type="mutagenesis site" description="Lost ability to trigger cell death in response to the Xanthomonas campestris effector XopAC/AvrAC in the presence of PBL2 and RKS1. Impaired interactions with RKS1, ZED1, ZRK3, ZRK6 and ZRK15." evidence="4 7">
    <original>P</original>
    <variation>L</variation>
    <location>
        <position position="816"/>
    </location>
</feature>
<feature type="mutagenesis site" description="Impaired interaction with RKS1 and reduced ability to mediate cell death as well as an increased sensitivity to the pathogenic biotrophic bacteria Xanthomonas campestris pv. campestris (Xcc); when associated with A-839." evidence="8">
    <original>W</original>
    <variation>A</variation>
    <location>
        <position position="825"/>
    </location>
</feature>
<feature type="mutagenesis site" description="Abolished HopZ1a-induced hypersensitive response (HR) and loss of resistance to Pseudomonas syringae pv. tomato DC3000." evidence="7">
    <original>S</original>
    <variation>F</variation>
    <location>
        <position position="831"/>
    </location>
</feature>
<feature type="mutagenesis site" description="Impaired interaction with RKS1 and reduced ability to mediate cell death as well as an increased sensitivity to the pathogenic biotrophic bacteria Xanthomonas campestris pv. campestris (Xcc); when associated with A-825." evidence="8">
    <original>F</original>
    <variation>A</variation>
    <location>
        <position position="839"/>
    </location>
</feature>
<feature type="sequence conflict" description="In Ref. 1; AAA63149." evidence="13" ref="1">
    <original>E</original>
    <variation>K</variation>
    <location>
        <position position="37"/>
    </location>
</feature>
<feature type="sequence conflict" description="In Ref. 1; AAA63149." evidence="13" ref="1">
    <location>
        <begin position="129"/>
        <end position="130"/>
    </location>
</feature>
<feature type="sequence conflict" description="In Ref. 1; AAA63149." evidence="13" ref="1">
    <original>EFI</original>
    <variation>KFR</variation>
    <location>
        <begin position="134"/>
        <end position="136"/>
    </location>
</feature>
<feature type="sequence conflict" description="In Ref. 1; AAA63149." evidence="13" ref="1">
    <original>S</original>
    <variation>T</variation>
    <location>
        <position position="770"/>
    </location>
</feature>
<feature type="helix" evidence="19">
    <location>
        <begin position="7"/>
        <end position="25"/>
    </location>
</feature>
<feature type="helix" evidence="19">
    <location>
        <begin position="27"/>
        <end position="48"/>
    </location>
</feature>
<feature type="helix" evidence="19">
    <location>
        <begin position="56"/>
        <end position="76"/>
    </location>
</feature>
<feature type="helix" evidence="19">
    <location>
        <begin position="77"/>
        <end position="79"/>
    </location>
</feature>
<feature type="helix" evidence="19">
    <location>
        <begin position="109"/>
        <end position="135"/>
    </location>
</feature>
<feature type="strand" evidence="19">
    <location>
        <begin position="157"/>
        <end position="159"/>
    </location>
</feature>
<feature type="helix" evidence="19">
    <location>
        <begin position="164"/>
        <end position="174"/>
    </location>
</feature>
<feature type="strand" evidence="19">
    <location>
        <begin position="180"/>
        <end position="188"/>
    </location>
</feature>
<feature type="helix" evidence="19">
    <location>
        <begin position="195"/>
        <end position="203"/>
    </location>
</feature>
<feature type="helix" evidence="19">
    <location>
        <begin position="206"/>
        <end position="211"/>
    </location>
</feature>
<feature type="strand" evidence="19">
    <location>
        <begin position="213"/>
        <end position="219"/>
    </location>
</feature>
<feature type="helix" evidence="19">
    <location>
        <begin position="226"/>
        <end position="237"/>
    </location>
</feature>
<feature type="helix" evidence="19">
    <location>
        <begin position="246"/>
        <end position="256"/>
    </location>
</feature>
<feature type="turn" evidence="19">
    <location>
        <begin position="257"/>
        <end position="259"/>
    </location>
</feature>
<feature type="strand" evidence="19">
    <location>
        <begin position="262"/>
        <end position="269"/>
    </location>
</feature>
<feature type="strand" evidence="19">
    <location>
        <begin position="271"/>
        <end position="273"/>
    </location>
</feature>
<feature type="helix" evidence="19">
    <location>
        <begin position="274"/>
        <end position="276"/>
    </location>
</feature>
<feature type="helix" evidence="19">
    <location>
        <begin position="277"/>
        <end position="280"/>
    </location>
</feature>
<feature type="helix" evidence="19">
    <location>
        <begin position="281"/>
        <end position="283"/>
    </location>
</feature>
<feature type="strand" evidence="19">
    <location>
        <begin position="291"/>
        <end position="297"/>
    </location>
</feature>
<feature type="helix" evidence="19">
    <location>
        <begin position="300"/>
        <end position="304"/>
    </location>
</feature>
<feature type="strand" evidence="19">
    <location>
        <begin position="309"/>
        <end position="313"/>
    </location>
</feature>
<feature type="helix" evidence="19">
    <location>
        <begin position="320"/>
        <end position="331"/>
    </location>
</feature>
<feature type="turn" evidence="19">
    <location>
        <begin position="332"/>
        <end position="337"/>
    </location>
</feature>
<feature type="helix" evidence="19">
    <location>
        <begin position="345"/>
        <end position="355"/>
    </location>
</feature>
<feature type="helix" evidence="19">
    <location>
        <begin position="359"/>
        <end position="370"/>
    </location>
</feature>
<feature type="helix" evidence="19">
    <location>
        <begin position="376"/>
        <end position="384"/>
    </location>
</feature>
<feature type="helix" evidence="19">
    <location>
        <begin position="386"/>
        <end position="396"/>
    </location>
</feature>
<feature type="helix" evidence="19">
    <location>
        <begin position="400"/>
        <end position="408"/>
    </location>
</feature>
<feature type="strand" evidence="19">
    <location>
        <begin position="409"/>
        <end position="411"/>
    </location>
</feature>
<feature type="helix" evidence="19">
    <location>
        <begin position="413"/>
        <end position="420"/>
    </location>
</feature>
<feature type="strand" evidence="19">
    <location>
        <begin position="423"/>
        <end position="425"/>
    </location>
</feature>
<feature type="helix" evidence="19">
    <location>
        <begin position="433"/>
        <end position="442"/>
    </location>
</feature>
<feature type="helix" evidence="19">
    <location>
        <begin position="455"/>
        <end position="467"/>
    </location>
</feature>
<feature type="strand" evidence="19">
    <location>
        <begin position="470"/>
        <end position="475"/>
    </location>
</feature>
<feature type="strand" evidence="19">
    <location>
        <begin position="484"/>
        <end position="486"/>
    </location>
</feature>
<feature type="helix" evidence="19">
    <location>
        <begin position="489"/>
        <end position="499"/>
    </location>
</feature>
<feature type="strand" evidence="19">
    <location>
        <begin position="508"/>
        <end position="510"/>
    </location>
</feature>
<feature type="strand" evidence="19">
    <location>
        <begin position="513"/>
        <end position="517"/>
    </location>
</feature>
<feature type="turn" evidence="19">
    <location>
        <begin position="522"/>
        <end position="524"/>
    </location>
</feature>
<feature type="strand" evidence="19">
    <location>
        <begin position="533"/>
        <end position="537"/>
    </location>
</feature>
<feature type="helix" evidence="19">
    <location>
        <begin position="549"/>
        <end position="555"/>
    </location>
</feature>
<feature type="strand" evidence="19">
    <location>
        <begin position="563"/>
        <end position="565"/>
    </location>
</feature>
<feature type="strand" evidence="19">
    <location>
        <begin position="568"/>
        <end position="570"/>
    </location>
</feature>
<feature type="helix" evidence="19">
    <location>
        <begin position="575"/>
        <end position="578"/>
    </location>
</feature>
<feature type="turn" evidence="19">
    <location>
        <begin position="579"/>
        <end position="583"/>
    </location>
</feature>
<feature type="strand" evidence="19">
    <location>
        <begin position="590"/>
        <end position="592"/>
    </location>
</feature>
<feature type="helix" evidence="19">
    <location>
        <begin position="605"/>
        <end position="608"/>
    </location>
</feature>
<feature type="strand" evidence="19">
    <location>
        <begin position="614"/>
        <end position="616"/>
    </location>
</feature>
<feature type="helix" evidence="19">
    <location>
        <begin position="628"/>
        <end position="631"/>
    </location>
</feature>
<feature type="strand" evidence="19">
    <location>
        <begin position="637"/>
        <end position="640"/>
    </location>
</feature>
<feature type="turn" evidence="19">
    <location>
        <begin position="654"/>
        <end position="656"/>
    </location>
</feature>
<feature type="strand" evidence="19">
    <location>
        <begin position="662"/>
        <end position="664"/>
    </location>
</feature>
<feature type="helix" evidence="19">
    <location>
        <begin position="678"/>
        <end position="682"/>
    </location>
</feature>
<feature type="strand" evidence="19">
    <location>
        <begin position="688"/>
        <end position="691"/>
    </location>
</feature>
<feature type="helix" evidence="19">
    <location>
        <begin position="696"/>
        <end position="698"/>
    </location>
</feature>
<feature type="helix" evidence="19">
    <location>
        <begin position="701"/>
        <end position="707"/>
    </location>
</feature>
<feature type="strand" evidence="19">
    <location>
        <begin position="715"/>
        <end position="718"/>
    </location>
</feature>
<feature type="helix" evidence="19">
    <location>
        <begin position="726"/>
        <end position="732"/>
    </location>
</feature>
<feature type="strand" evidence="19">
    <location>
        <begin position="743"/>
        <end position="746"/>
    </location>
</feature>
<feature type="turn" evidence="19">
    <location>
        <begin position="760"/>
        <end position="762"/>
    </location>
</feature>
<feature type="strand" evidence="19">
    <location>
        <begin position="768"/>
        <end position="771"/>
    </location>
</feature>
<feature type="helix" evidence="19">
    <location>
        <begin position="781"/>
        <end position="783"/>
    </location>
</feature>
<feature type="strand" evidence="19">
    <location>
        <begin position="795"/>
        <end position="800"/>
    </location>
</feature>
<feature type="helix" evidence="19">
    <location>
        <begin position="808"/>
        <end position="814"/>
    </location>
</feature>
<feature type="strand" evidence="19">
    <location>
        <begin position="819"/>
        <end position="825"/>
    </location>
</feature>
<feature type="strand" evidence="19">
    <location>
        <begin position="832"/>
        <end position="835"/>
    </location>
</feature>
<feature type="strand" evidence="19">
    <location>
        <begin position="837"/>
        <end position="840"/>
    </location>
</feature>
<comment type="function">
    <text evidence="2 4 5 6 7 8 9">CC-NB-LRR receptor-like protein required for recognition of pathogenic bacteria type III effectors (T3E) such as Pseudomonas syringae HopZ1a and HopF2a and Xanthomonas campestris pv. campestris (Xcc) XopAC/AvrAC; this recognition requires ZED1-related kinases (e.g. PBL2, ZRK3 and ZED1/ZRK5) (PubMed:20368970, PubMed:26355215, PubMed:28288096, PubMed:28652264, PubMed:30948526, PubMed:30948527). Confers allele-specific recognition and virulence attenuation of HopZ1a (PubMed:20368970). Immunity mediated by RPP13L4/ZAR1 is independent of several genes required by other resistance protein signaling pathways such as NDR1 and RAR1 (PubMed:20368970). Together with ZED1/ZRK5, involved in the regulation of the ambient temperature-sensitive intersection of growth and immune response in the absence of pathogens (PubMed:28499073).</text>
</comment>
<comment type="activity regulation">
    <text evidence="8">Exhibits autoinhibition activity.</text>
</comment>
<comment type="subunit">
    <text evidence="3 4 7 8 9">Interacts with ZED1/ZRK5 (PubMed:24170858). Component of a stable high-order oligomeric complex made of RKS1 and RPP13L4/ZAR1 which recruits ZED1-related kinases (e.g. uridylylated PBL2 and acetylated ZED1/ZRK5) in the presence of ATP and pathogenic bacteria type III secreted effector (T3SE) proteins (e.g. Pseudomonas syringae HopZ1a and HopF2a and Xanthomonas campestris pv. campestris (Xcc) XopAC/AvrAC) to form a wheel-like pentameric resistosome; this complex triggers immunity toward pathogenic bacteria (e.g. X.campestris and P.syringae), especially in vascular tissues (PubMed:26355215, PubMed:30948526, PubMed:30948527). Interacts with RKS1, ZED1/ZRK5, ZRK3, ZRK6 and ZRK15 (PubMed:26355215, PubMed:28652264, PubMed:30948526).</text>
</comment>
<comment type="subcellular location">
    <subcellularLocation>
        <location evidence="9">Cell membrane</location>
    </subcellularLocation>
    <subcellularLocation>
        <location evidence="7">Nucleus</location>
    </subcellularLocation>
    <text evidence="9">Associates with the plasma membrane in the presence of the Xanthomonas campestris effector XopAC/AvrAC.</text>
</comment>
<comment type="domain">
    <text evidence="9">N-terminal amphipathic alpha helix form a funnel-shaped structure that is required for the plasma membrane association of the resistosome complex, cell death triggering, and disease resistance.</text>
</comment>
<comment type="disruption phenotype">
    <text evidence="4 5 9">Increased sensitivity to the pathogenic biotrophic bacteria Xanthomonas campestris pv. campestris (Xcc) (PubMed:26355215, PubMed:30948527). Reduced resistance to Pseudomonas syringae expressing HopZ1a (PubMed:26355215, PubMed:28288096).</text>
</comment>
<comment type="similarity">
    <text evidence="13">Belongs to the disease resistance NB-LRR family. RPP13 subfamily.</text>
</comment>
<comment type="sequence caution" evidence="13">
    <conflict type="erroneous initiation">
        <sequence resource="EMBL-CDS" id="AAA63149"/>
    </conflict>
    <text>Extended N-terminus.</text>
</comment>
<comment type="online information" name="NIB-LRRS">
    <link uri="http://niblrrs.ucdavis.edu"/>
    <text>Functional and comparative genomics of disease resistance gene homologs</text>
</comment>
<dbReference type="EMBL" id="U19616">
    <property type="protein sequence ID" value="AAA63149.1"/>
    <property type="status" value="ALT_INIT"/>
    <property type="molecule type" value="Genomic_DNA"/>
</dbReference>
<dbReference type="EMBL" id="AL049862">
    <property type="protein sequence ID" value="CAB42924.1"/>
    <property type="molecule type" value="Genomic_DNA"/>
</dbReference>
<dbReference type="EMBL" id="CP002686">
    <property type="protein sequence ID" value="AEE78730.1"/>
    <property type="molecule type" value="Genomic_DNA"/>
</dbReference>
<dbReference type="EMBL" id="CP002686">
    <property type="protein sequence ID" value="AEE78731.1"/>
    <property type="molecule type" value="Genomic_DNA"/>
</dbReference>
<dbReference type="EMBL" id="AK227017">
    <property type="protein sequence ID" value="BAE99081.1"/>
    <property type="molecule type" value="mRNA"/>
</dbReference>
<dbReference type="PIR" id="T08416">
    <property type="entry name" value="T08416"/>
</dbReference>
<dbReference type="RefSeq" id="NP_190664.1">
    <property type="nucleotide sequence ID" value="NM_114955.4"/>
</dbReference>
<dbReference type="RefSeq" id="NP_850677.1">
    <property type="nucleotide sequence ID" value="NM_180346.1"/>
</dbReference>
<dbReference type="PDB" id="6J5T">
    <property type="method" value="EM"/>
    <property type="resolution" value="3.40 A"/>
    <property type="chains" value="C/F/G/L/O=1-852"/>
</dbReference>
<dbReference type="PDB" id="6J5U">
    <property type="method" value="EM"/>
    <property type="resolution" value="3.90 A"/>
    <property type="chains" value="A=1-852"/>
</dbReference>
<dbReference type="PDB" id="6J5V">
    <property type="method" value="EM"/>
    <property type="resolution" value="4.25 A"/>
    <property type="chains" value="A=1-852"/>
</dbReference>
<dbReference type="PDB" id="6J5W">
    <property type="method" value="EM"/>
    <property type="resolution" value="3.70 A"/>
    <property type="chains" value="A=1-852"/>
</dbReference>
<dbReference type="PDB" id="6J6I">
    <property type="method" value="EM"/>
    <property type="resolution" value="3.70 A"/>
    <property type="chains" value="C/F/G/L/O=1-852"/>
</dbReference>
<dbReference type="PDBsum" id="6J5T"/>
<dbReference type="PDBsum" id="6J5U"/>
<dbReference type="PDBsum" id="6J5V"/>
<dbReference type="PDBsum" id="6J5W"/>
<dbReference type="PDBsum" id="6J6I"/>
<dbReference type="EMDB" id="EMD-0680"/>
<dbReference type="EMDB" id="EMD-0681"/>
<dbReference type="EMDB" id="EMD-0682"/>
<dbReference type="EMDB" id="EMD-0683"/>
<dbReference type="EMDB" id="EMD-0688"/>
<dbReference type="SMR" id="Q38834"/>
<dbReference type="BioGRID" id="9577">
    <property type="interactions" value="4"/>
</dbReference>
<dbReference type="DIP" id="DIP-48342N"/>
<dbReference type="FunCoup" id="Q38834">
    <property type="interactions" value="165"/>
</dbReference>
<dbReference type="IntAct" id="Q38834">
    <property type="interactions" value="1"/>
</dbReference>
<dbReference type="STRING" id="3702.Q38834"/>
<dbReference type="TCDB" id="1.A.25.3.9">
    <property type="family name" value="the gap junction-forming innexin (innexin) family"/>
</dbReference>
<dbReference type="PaxDb" id="3702-AT3G50950.1"/>
<dbReference type="ProteomicsDB" id="236209"/>
<dbReference type="EnsemblPlants" id="AT3G50950.1">
    <property type="protein sequence ID" value="AT3G50950.1"/>
    <property type="gene ID" value="AT3G50950"/>
</dbReference>
<dbReference type="EnsemblPlants" id="AT3G50950.2">
    <property type="protein sequence ID" value="AT3G50950.2"/>
    <property type="gene ID" value="AT3G50950"/>
</dbReference>
<dbReference type="GeneID" id="824259"/>
<dbReference type="Gramene" id="AT3G50950.1">
    <property type="protein sequence ID" value="AT3G50950.1"/>
    <property type="gene ID" value="AT3G50950"/>
</dbReference>
<dbReference type="Gramene" id="AT3G50950.2">
    <property type="protein sequence ID" value="AT3G50950.2"/>
    <property type="gene ID" value="AT3G50950"/>
</dbReference>
<dbReference type="KEGG" id="ath:AT3G50950"/>
<dbReference type="Araport" id="AT3G50950"/>
<dbReference type="TAIR" id="AT3G50950">
    <property type="gene designation" value="ZAR1"/>
</dbReference>
<dbReference type="eggNOG" id="KOG4658">
    <property type="taxonomic scope" value="Eukaryota"/>
</dbReference>
<dbReference type="HOGENOM" id="CLU_000837_25_2_1"/>
<dbReference type="InParanoid" id="Q38834"/>
<dbReference type="OMA" id="MLRYMSI"/>
<dbReference type="PhylomeDB" id="Q38834"/>
<dbReference type="PRO" id="PR:Q38834"/>
<dbReference type="Proteomes" id="UP000006548">
    <property type="component" value="Chromosome 3"/>
</dbReference>
<dbReference type="ExpressionAtlas" id="Q38834">
    <property type="expression patterns" value="baseline and differential"/>
</dbReference>
<dbReference type="GO" id="GO:0005634">
    <property type="term" value="C:nucleus"/>
    <property type="evidence" value="ECO:0000314"/>
    <property type="project" value="UniProtKB"/>
</dbReference>
<dbReference type="GO" id="GO:0005886">
    <property type="term" value="C:plasma membrane"/>
    <property type="evidence" value="ECO:0007669"/>
    <property type="project" value="UniProtKB-SubCell"/>
</dbReference>
<dbReference type="GO" id="GO:0043531">
    <property type="term" value="F:ADP binding"/>
    <property type="evidence" value="ECO:0007669"/>
    <property type="project" value="InterPro"/>
</dbReference>
<dbReference type="GO" id="GO:0042742">
    <property type="term" value="P:defense response to bacterium"/>
    <property type="evidence" value="ECO:0000315"/>
    <property type="project" value="UniProtKB"/>
</dbReference>
<dbReference type="GO" id="GO:0050829">
    <property type="term" value="P:defense response to Gram-negative bacterium"/>
    <property type="evidence" value="ECO:0000315"/>
    <property type="project" value="TAIR"/>
</dbReference>
<dbReference type="GO" id="GO:0050776">
    <property type="term" value="P:regulation of immune response"/>
    <property type="evidence" value="ECO:0000315"/>
    <property type="project" value="UniProtKB"/>
</dbReference>
<dbReference type="CDD" id="cd14798">
    <property type="entry name" value="RX-CC_like"/>
    <property type="match status" value="1"/>
</dbReference>
<dbReference type="FunFam" id="3.40.50.300:FF:001091">
    <property type="entry name" value="Probable disease resistance protein At1g61300"/>
    <property type="match status" value="1"/>
</dbReference>
<dbReference type="FunFam" id="1.10.10.10:FF:000322">
    <property type="entry name" value="Probable disease resistance protein At1g63360"/>
    <property type="match status" value="1"/>
</dbReference>
<dbReference type="FunFam" id="1.10.8.430:FF:000003">
    <property type="entry name" value="Probable disease resistance protein At5g66910"/>
    <property type="match status" value="1"/>
</dbReference>
<dbReference type="Gene3D" id="1.20.5.4130">
    <property type="match status" value="1"/>
</dbReference>
<dbReference type="Gene3D" id="1.10.8.430">
    <property type="entry name" value="Helical domain of apoptotic protease-activating factors"/>
    <property type="match status" value="1"/>
</dbReference>
<dbReference type="Gene3D" id="3.40.50.300">
    <property type="entry name" value="P-loop containing nucleotide triphosphate hydrolases"/>
    <property type="match status" value="1"/>
</dbReference>
<dbReference type="Gene3D" id="3.80.10.10">
    <property type="entry name" value="Ribonuclease Inhibitor"/>
    <property type="match status" value="2"/>
</dbReference>
<dbReference type="InterPro" id="IPR042197">
    <property type="entry name" value="Apaf_helical"/>
</dbReference>
<dbReference type="InterPro" id="IPR044974">
    <property type="entry name" value="Disease_R_plants"/>
</dbReference>
<dbReference type="InterPro" id="IPR032675">
    <property type="entry name" value="LRR_dom_sf"/>
</dbReference>
<dbReference type="InterPro" id="IPR055414">
    <property type="entry name" value="LRR_R13L4/SHOC2-like"/>
</dbReference>
<dbReference type="InterPro" id="IPR002182">
    <property type="entry name" value="NB-ARC"/>
</dbReference>
<dbReference type="InterPro" id="IPR027417">
    <property type="entry name" value="P-loop_NTPase"/>
</dbReference>
<dbReference type="InterPro" id="IPR038005">
    <property type="entry name" value="RX-like_CC"/>
</dbReference>
<dbReference type="InterPro" id="IPR041118">
    <property type="entry name" value="Rx_N"/>
</dbReference>
<dbReference type="PANTHER" id="PTHR23155">
    <property type="entry name" value="DISEASE RESISTANCE PROTEIN RP"/>
    <property type="match status" value="1"/>
</dbReference>
<dbReference type="PANTHER" id="PTHR23155:SF1172">
    <property type="entry name" value="DISEASE RESISTANCE RPP13-LIKE PROTEIN 4"/>
    <property type="match status" value="1"/>
</dbReference>
<dbReference type="Pfam" id="PF23598">
    <property type="entry name" value="LRR_14"/>
    <property type="match status" value="1"/>
</dbReference>
<dbReference type="Pfam" id="PF00931">
    <property type="entry name" value="NB-ARC"/>
    <property type="match status" value="1"/>
</dbReference>
<dbReference type="Pfam" id="PF18052">
    <property type="entry name" value="Rx_N"/>
    <property type="match status" value="1"/>
</dbReference>
<dbReference type="Pfam" id="PF23559">
    <property type="entry name" value="WH_DRP"/>
    <property type="match status" value="1"/>
</dbReference>
<dbReference type="PRINTS" id="PR00364">
    <property type="entry name" value="DISEASERSIST"/>
</dbReference>
<dbReference type="SUPFAM" id="SSF52058">
    <property type="entry name" value="L domain-like"/>
    <property type="match status" value="1"/>
</dbReference>
<dbReference type="SUPFAM" id="SSF52540">
    <property type="entry name" value="P-loop containing nucleoside triphosphate hydrolases"/>
    <property type="match status" value="1"/>
</dbReference>
<protein>
    <recommendedName>
        <fullName>Disease resistance RPP13-like protein 4</fullName>
    </recommendedName>
    <alternativeName>
        <fullName evidence="13">Disease resistance protein ZAR1</fullName>
    </alternativeName>
    <alternativeName>
        <fullName evidence="10">Protein HOPZ-ACTIVATED RESISTANCE 1</fullName>
        <shortName evidence="12">AtZAR1</shortName>
    </alternativeName>
</protein>
<gene>
    <name type="primary">RPP13L4</name>
    <name evidence="10 11" type="synonym">ZAR1</name>
    <name evidence="14" type="ordered locus">At3g50950</name>
    <name evidence="15" type="ORF">F18B3.230</name>
</gene>
<organism>
    <name type="scientific">Arabidopsis thaliana</name>
    <name type="common">Mouse-ear cress</name>
    <dbReference type="NCBI Taxonomy" id="3702"/>
    <lineage>
        <taxon>Eukaryota</taxon>
        <taxon>Viridiplantae</taxon>
        <taxon>Streptophyta</taxon>
        <taxon>Embryophyta</taxon>
        <taxon>Tracheophyta</taxon>
        <taxon>Spermatophyta</taxon>
        <taxon>Magnoliopsida</taxon>
        <taxon>eudicotyledons</taxon>
        <taxon>Gunneridae</taxon>
        <taxon>Pentapetalae</taxon>
        <taxon>rosids</taxon>
        <taxon>malvids</taxon>
        <taxon>Brassicales</taxon>
        <taxon>Brassicaceae</taxon>
        <taxon>Camelineae</taxon>
        <taxon>Arabidopsis</taxon>
    </lineage>
</organism>
<keyword id="KW-0002">3D-structure</keyword>
<keyword id="KW-1003">Cell membrane</keyword>
<keyword id="KW-0175">Coiled coil</keyword>
<keyword id="KW-0433">Leucine-rich repeat</keyword>
<keyword id="KW-0472">Membrane</keyword>
<keyword id="KW-0547">Nucleotide-binding</keyword>
<keyword id="KW-0539">Nucleus</keyword>
<keyword id="KW-0611">Plant defense</keyword>
<keyword id="KW-1185">Reference proteome</keyword>
<keyword id="KW-0677">Repeat</keyword>
<sequence>MVDAVVTVFLEKTLNILEEKGRTVSDYRKQLEDLQSELKYMQSFLKDAERQKRTNETLRTLVADLRELVYEAEDILVDCQLADGDDGNEQRSSNAWLSRLHPARVPLQYKKSKRLQEINERITKIKSQVEPYFEFITPSNVGRDNGTDRWSSPVYDHTQVVGLEGDKRKIKEWLFRSNDSQLLIMAFVGMGGLGKTTIAQEVFNDKEIEHRFERRIWVSVSQTFTEEQIMRSILRNLGDASVGDDIGTLLRKIQQYLLGKRYLIVMDDVWDKNLSWWDKIYQGLPRGQGGSVIVTTRSESVAKRVQARDDKTHRPELLSPDNSWLLFCNVAFAANDGTCERPELEDVGKEIVTKCKGLPLTIKAVGGLLLCKDHVYHEWRRIAEHFQDELRGNTSETDNVMSSLQLSYDELPSHLKSCILTLSLYPEDCVIPKQQLVHGWIGEGFVMWRNGRSATESGEDCFSGLTNRCLIEVVDKTYSGTIITCKIHDMVRDLVIDIAKKDSFSNPEGLNCRHLGISGNFDEKQIKVNHKLRGVVSTTKTGEVNKLNSDLAKKFTDCKYLRVLDISKSIFDAPLSEILDEIASLQHLACLSLSNTHPLIQFPRSMEDLHNLQILDASYCQNLKQLQPCIVLFKKLLVLDMTNCGSLECFPKGIGSLVKLEVLLGFKPARSNNGCKLSEVKNLTNLRKLGLSLTRGDQIEEEELDSLINLSKLMSISINCYDSYGDDLITKIDALTPPHQLHELSLQFYPGKSSPSWLSPHKLPMLRYMSICSGNLVKMQEPFWGNENTHWRIEGLMLSSLSDLDMDWEVLQQSMPYLRTVTANWCPELESFAIEDVGFRGGVWMKTPLHRT</sequence>
<name>R13L4_ARATH</name>
<evidence type="ECO:0000255" key="1"/>
<evidence type="ECO:0000269" key="2">
    <source>
    </source>
</evidence>
<evidence type="ECO:0000269" key="3">
    <source>
    </source>
</evidence>
<evidence type="ECO:0000269" key="4">
    <source>
    </source>
</evidence>
<evidence type="ECO:0000269" key="5">
    <source>
    </source>
</evidence>
<evidence type="ECO:0000269" key="6">
    <source>
    </source>
</evidence>
<evidence type="ECO:0000269" key="7">
    <source>
    </source>
</evidence>
<evidence type="ECO:0000269" key="8">
    <source>
    </source>
</evidence>
<evidence type="ECO:0000269" key="9">
    <source>
    </source>
</evidence>
<evidence type="ECO:0000303" key="10">
    <source>
    </source>
</evidence>
<evidence type="ECO:0000303" key="11">
    <source>
    </source>
</evidence>
<evidence type="ECO:0000303" key="12">
    <source>
    </source>
</evidence>
<evidence type="ECO:0000305" key="13"/>
<evidence type="ECO:0000312" key="14">
    <source>
        <dbReference type="Araport" id="AT3G50950"/>
    </source>
</evidence>
<evidence type="ECO:0000312" key="15">
    <source>
        <dbReference type="EMBL" id="CAB42924.1"/>
    </source>
</evidence>
<evidence type="ECO:0007744" key="16">
    <source>
        <dbReference type="PDB" id="6J5T"/>
    </source>
</evidence>
<evidence type="ECO:0007744" key="17">
    <source>
        <dbReference type="PDB" id="6J5W"/>
    </source>
</evidence>
<evidence type="ECO:0007744" key="18">
    <source>
        <dbReference type="PDB" id="6J6I"/>
    </source>
</evidence>
<evidence type="ECO:0007829" key="19">
    <source>
        <dbReference type="PDB" id="6J5T"/>
    </source>
</evidence>
<reference key="1">
    <citation type="submission" date="1995-01" db="EMBL/GenBank/DDBJ databases">
        <title>Incomplete sequence of an Arabidopsis gene with similarities to myosin heavy chain.</title>
        <authorList>
            <person name="Rouse D.T."/>
            <person name="Heazlewood J.L."/>
        </authorList>
    </citation>
    <scope>NUCLEOTIDE SEQUENCE [GENOMIC DNA]</scope>
    <source>
        <strain>cv. Landsberg erecta</strain>
    </source>
</reference>
<reference key="2">
    <citation type="journal article" date="2000" name="Nature">
        <title>Sequence and analysis of chromosome 3 of the plant Arabidopsis thaliana.</title>
        <authorList>
            <person name="Salanoubat M."/>
            <person name="Lemcke K."/>
            <person name="Rieger M."/>
            <person name="Ansorge W."/>
            <person name="Unseld M."/>
            <person name="Fartmann B."/>
            <person name="Valle G."/>
            <person name="Bloecker H."/>
            <person name="Perez-Alonso M."/>
            <person name="Obermaier B."/>
            <person name="Delseny M."/>
            <person name="Boutry M."/>
            <person name="Grivell L.A."/>
            <person name="Mache R."/>
            <person name="Puigdomenech P."/>
            <person name="De Simone V."/>
            <person name="Choisne N."/>
            <person name="Artiguenave F."/>
            <person name="Robert C."/>
            <person name="Brottier P."/>
            <person name="Wincker P."/>
            <person name="Cattolico L."/>
            <person name="Weissenbach J."/>
            <person name="Saurin W."/>
            <person name="Quetier F."/>
            <person name="Schaefer M."/>
            <person name="Mueller-Auer S."/>
            <person name="Gabel C."/>
            <person name="Fuchs M."/>
            <person name="Benes V."/>
            <person name="Wurmbach E."/>
            <person name="Drzonek H."/>
            <person name="Erfle H."/>
            <person name="Jordan N."/>
            <person name="Bangert S."/>
            <person name="Wiedelmann R."/>
            <person name="Kranz H."/>
            <person name="Voss H."/>
            <person name="Holland R."/>
            <person name="Brandt P."/>
            <person name="Nyakatura G."/>
            <person name="Vezzi A."/>
            <person name="D'Angelo M."/>
            <person name="Pallavicini A."/>
            <person name="Toppo S."/>
            <person name="Simionati B."/>
            <person name="Conrad A."/>
            <person name="Hornischer K."/>
            <person name="Kauer G."/>
            <person name="Loehnert T.-H."/>
            <person name="Nordsiek G."/>
            <person name="Reichelt J."/>
            <person name="Scharfe M."/>
            <person name="Schoen O."/>
            <person name="Bargues M."/>
            <person name="Terol J."/>
            <person name="Climent J."/>
            <person name="Navarro P."/>
            <person name="Collado C."/>
            <person name="Perez-Perez A."/>
            <person name="Ottenwaelder B."/>
            <person name="Duchemin D."/>
            <person name="Cooke R."/>
            <person name="Laudie M."/>
            <person name="Berger-Llauro C."/>
            <person name="Purnelle B."/>
            <person name="Masuy D."/>
            <person name="de Haan M."/>
            <person name="Maarse A.C."/>
            <person name="Alcaraz J.-P."/>
            <person name="Cottet A."/>
            <person name="Casacuberta E."/>
            <person name="Monfort A."/>
            <person name="Argiriou A."/>
            <person name="Flores M."/>
            <person name="Liguori R."/>
            <person name="Vitale D."/>
            <person name="Mannhaupt G."/>
            <person name="Haase D."/>
            <person name="Schoof H."/>
            <person name="Rudd S."/>
            <person name="Zaccaria P."/>
            <person name="Mewes H.-W."/>
            <person name="Mayer K.F.X."/>
            <person name="Kaul S."/>
            <person name="Town C.D."/>
            <person name="Koo H.L."/>
            <person name="Tallon L.J."/>
            <person name="Jenkins J."/>
            <person name="Rooney T."/>
            <person name="Rizzo M."/>
            <person name="Walts A."/>
            <person name="Utterback T."/>
            <person name="Fujii C.Y."/>
            <person name="Shea T.P."/>
            <person name="Creasy T.H."/>
            <person name="Haas B."/>
            <person name="Maiti R."/>
            <person name="Wu D."/>
            <person name="Peterson J."/>
            <person name="Van Aken S."/>
            <person name="Pai G."/>
            <person name="Militscher J."/>
            <person name="Sellers P."/>
            <person name="Gill J.E."/>
            <person name="Feldblyum T.V."/>
            <person name="Preuss D."/>
            <person name="Lin X."/>
            <person name="Nierman W.C."/>
            <person name="Salzberg S.L."/>
            <person name="White O."/>
            <person name="Venter J.C."/>
            <person name="Fraser C.M."/>
            <person name="Kaneko T."/>
            <person name="Nakamura Y."/>
            <person name="Sato S."/>
            <person name="Kato T."/>
            <person name="Asamizu E."/>
            <person name="Sasamoto S."/>
            <person name="Kimura T."/>
            <person name="Idesawa K."/>
            <person name="Kawashima K."/>
            <person name="Kishida Y."/>
            <person name="Kiyokawa C."/>
            <person name="Kohara M."/>
            <person name="Matsumoto M."/>
            <person name="Matsuno A."/>
            <person name="Muraki A."/>
            <person name="Nakayama S."/>
            <person name="Nakazaki N."/>
            <person name="Shinpo S."/>
            <person name="Takeuchi C."/>
            <person name="Wada T."/>
            <person name="Watanabe A."/>
            <person name="Yamada M."/>
            <person name="Yasuda M."/>
            <person name="Tabata S."/>
        </authorList>
    </citation>
    <scope>NUCLEOTIDE SEQUENCE [LARGE SCALE GENOMIC DNA]</scope>
    <source>
        <strain>cv. Columbia</strain>
    </source>
</reference>
<reference key="3">
    <citation type="journal article" date="2017" name="Plant J.">
        <title>Araport11: a complete reannotation of the Arabidopsis thaliana reference genome.</title>
        <authorList>
            <person name="Cheng C.Y."/>
            <person name="Krishnakumar V."/>
            <person name="Chan A.P."/>
            <person name="Thibaud-Nissen F."/>
            <person name="Schobel S."/>
            <person name="Town C.D."/>
        </authorList>
    </citation>
    <scope>GENOME REANNOTATION</scope>
    <source>
        <strain>cv. Columbia</strain>
    </source>
</reference>
<reference key="4">
    <citation type="submission" date="2006-07" db="EMBL/GenBank/DDBJ databases">
        <title>Large-scale analysis of RIKEN Arabidopsis full-length (RAFL) cDNAs.</title>
        <authorList>
            <person name="Totoki Y."/>
            <person name="Seki M."/>
            <person name="Ishida J."/>
            <person name="Nakajima M."/>
            <person name="Enju A."/>
            <person name="Kamiya A."/>
            <person name="Narusaka M."/>
            <person name="Shin-i T."/>
            <person name="Nakagawa M."/>
            <person name="Sakamoto N."/>
            <person name="Oishi K."/>
            <person name="Kohara Y."/>
            <person name="Kobayashi M."/>
            <person name="Toyoda A."/>
            <person name="Sakaki Y."/>
            <person name="Sakurai T."/>
            <person name="Iida K."/>
            <person name="Akiyama K."/>
            <person name="Satou M."/>
            <person name="Toyoda T."/>
            <person name="Konagaya A."/>
            <person name="Carninci P."/>
            <person name="Kawai J."/>
            <person name="Hayashizaki Y."/>
            <person name="Shinozaki K."/>
        </authorList>
    </citation>
    <scope>NUCLEOTIDE SEQUENCE [LARGE SCALE MRNA]</scope>
    <source>
        <strain>cv. Columbia</strain>
    </source>
</reference>
<reference key="5">
    <citation type="journal article" date="2010" name="PLoS Genet.">
        <title>Allele-specific virulence attenuation of the Pseudomonas syringae HopZ1a type III effector via the Arabidopsis ZAR1 resistance protein.</title>
        <authorList>
            <person name="Lewis J.D."/>
            <person name="Wu R."/>
            <person name="Guttman D.S."/>
            <person name="Desveaux D."/>
        </authorList>
    </citation>
    <scope>FUNCTION</scope>
</reference>
<reference key="6">
    <citation type="journal article" date="2013" name="Proc. Natl. Acad. Sci. U.S.A.">
        <title>The Arabidopsis ZED1 pseudokinase is required for ZAR1-mediated immunity induced by the Pseudomonas syringae type III effector HopZ1a.</title>
        <authorList>
            <person name="Lewis J.D."/>
            <person name="Lee A.H."/>
            <person name="Hassan J.A."/>
            <person name="Wan J."/>
            <person name="Hurley B."/>
            <person name="Jhingree J.R."/>
            <person name="Wang P.W."/>
            <person name="Lo T."/>
            <person name="Youn J.Y."/>
            <person name="Guttman D.S."/>
            <person name="Desveaux D."/>
        </authorList>
    </citation>
    <scope>INTERACTION WITH ZED1</scope>
</reference>
<reference key="7">
    <citation type="journal article" date="2015" name="Cell Host Microbe">
        <title>The decoy substrate of a pathogen effector and a pseudokinase specify pathogen-induced modified-self recognition and immunity in plants.</title>
        <authorList>
            <person name="Wang G."/>
            <person name="Roux B."/>
            <person name="Feng F."/>
            <person name="Guy E."/>
            <person name="Li L."/>
            <person name="Li N."/>
            <person name="Zhang X."/>
            <person name="Lautier M."/>
            <person name="Jardinaud M.-F."/>
            <person name="Chabannes M."/>
            <person name="Arlat M."/>
            <person name="Chen S."/>
            <person name="He C."/>
            <person name="Noel L.D."/>
            <person name="Zhou J.-M."/>
        </authorList>
    </citation>
    <scope>FUNCTION</scope>
    <scope>MUTAGENESIS OF LYS-195; PRO-359 AND PRO-816</scope>
    <scope>DISRUPTION PHENOTYPE</scope>
    <scope>SUBUNIT</scope>
    <scope>INTERACTION WITH RKS1; ZED1; ZRK3; ZRK6 AND ZRK15</scope>
    <source>
        <strain>cv. Columbia</strain>
    </source>
</reference>
<reference key="8">
    <citation type="journal article" date="2017" name="Nat. Plants">
        <title>Expanded type III effector recognition by the ZAR1 NLR protein using ZED1-related kinases.</title>
        <authorList>
            <person name="Seto D."/>
            <person name="Koulena N."/>
            <person name="Lo T."/>
            <person name="Menna A."/>
            <person name="Guttman D.S."/>
            <person name="Desveaux D."/>
        </authorList>
    </citation>
    <scope>FUNCTION</scope>
    <scope>DISRUPTION PHENOTYPE</scope>
    <source>
        <strain>cv. Columbia</strain>
    </source>
</reference>
<reference key="9">
    <citation type="journal article" date="2017" name="New Phytol.">
        <title>Arabidopsis ZED1-related kinases mediate the temperature-sensitive intersection of immune response and growth homeostasis.</title>
        <authorList>
            <person name="Wang Z."/>
            <person name="Cui D."/>
            <person name="Liu J."/>
            <person name="Zhao J."/>
            <person name="Liu C."/>
            <person name="Xin W."/>
            <person name="Li Y."/>
            <person name="Liu N."/>
            <person name="Ren D."/>
            <person name="Tang D."/>
            <person name="Hu Y."/>
        </authorList>
    </citation>
    <scope>FUNCTION</scope>
    <scope>INTERACTION WITH ZED1</scope>
    <source>
        <strain>cv. Columbia</strain>
        <strain>cv. Landsberg erecta</strain>
    </source>
</reference>
<reference key="10">
    <citation type="journal article" date="2017" name="Plant Physiol.">
        <title>Analysis of the ZAR1 immune complex reveals determinants for immunity and molecular interactions.</title>
        <authorList>
            <person name="Baudin M."/>
            <person name="Hassan J.A."/>
            <person name="Schreiber K.J."/>
            <person name="Lewis J.D."/>
        </authorList>
    </citation>
    <scope>FUNCTION</scope>
    <scope>MUTAGENESIS OF VAL-202; SER-291; LEU-465; GLY-645; PRO-816 AND SER-831</scope>
    <scope>INTERACTION WITH ZED1/ZRK5</scope>
    <scope>SUBCELLULAR LOCATION</scope>
    <source>
        <strain>cv. Columbia</strain>
    </source>
</reference>
<reference key="11">
    <citation type="journal article" date="2019" name="Science">
        <title>Reconstitution and structure of a plant NLR resistosome conferring immunity.</title>
        <authorList>
            <person name="Wang J."/>
            <person name="Hu M."/>
            <person name="Wang J."/>
            <person name="Qi J."/>
            <person name="Han Z."/>
            <person name="Wang G."/>
            <person name="Qi Y."/>
            <person name="Wang H.-W."/>
            <person name="Zhou J.-M."/>
            <person name="Chai J."/>
        </authorList>
    </citation>
    <scope>STRUCTURE BY ELECTRON MICROSCOPY (3.40 ANGSTROMS) IN COMPLEX WITH DTP</scope>
    <scope>FUNCTION</scope>
    <scope>MUTAGENESIS OF 1-MET--VAL-6; 1-MET--LEU-10; 1-MET--THR-23; PHE-9; LEU-10; LEU-14; ILE-136; ARG-149; TRP-150; SER-152; VAL-154; LYS-195 AND ARG-297</scope>
    <scope>DISRUPTION PHENOTYPE</scope>
    <scope>SUBUNIT</scope>
    <scope>DOMAIN</scope>
    <scope>SUBCELLULAR LOCATION</scope>
    <source>
        <strain>cv. Columbia</strain>
    </source>
</reference>
<reference key="12">
    <citation type="journal article" date="2019" name="Science">
        <title>Ligand-triggered allosteric ADP release primes a plant NLR complex.</title>
        <authorList>
            <person name="Wang J."/>
            <person name="Wang J."/>
            <person name="Hu M."/>
            <person name="Wu S."/>
            <person name="Qi J."/>
            <person name="Wang G."/>
            <person name="Han Z."/>
            <person name="Qi Y."/>
            <person name="Gao N."/>
            <person name="Wang H.-W."/>
            <person name="Zhou J.-M."/>
            <person name="Chai J."/>
        </authorList>
    </citation>
    <scope>STRUCTURE BY ELECTRON MICROSCOPY (3.70 ANGSTROMS) IN COMPLEX WITH ADP</scope>
    <scope>FUNCTION</scope>
    <scope>MUTAGENESIS OF VAL-544; HIS-597; TRP-825 AND PHE-839</scope>
    <scope>SUBUNIT</scope>
    <scope>ACTIVITY REGULATION</scope>
    <scope>INTERACTION WITH RKS1</scope>
    <source>
        <strain>cv. Columbia</strain>
    </source>
</reference>
<accession>Q38834</accession>
<accession>Q0WUW7</accession>
<accession>Q9SVK4</accession>
<proteinExistence type="evidence at protein level"/>